<gene>
    <name evidence="1" type="primary">gpmB</name>
    <name type="ordered locus">SBO_4458</name>
</gene>
<reference key="1">
    <citation type="journal article" date="2005" name="Nucleic Acids Res.">
        <title>Genome dynamics and diversity of Shigella species, the etiologic agents of bacillary dysentery.</title>
        <authorList>
            <person name="Yang F."/>
            <person name="Yang J."/>
            <person name="Zhang X."/>
            <person name="Chen L."/>
            <person name="Jiang Y."/>
            <person name="Yan Y."/>
            <person name="Tang X."/>
            <person name="Wang J."/>
            <person name="Xiong Z."/>
            <person name="Dong J."/>
            <person name="Xue Y."/>
            <person name="Zhu Y."/>
            <person name="Xu X."/>
            <person name="Sun L."/>
            <person name="Chen S."/>
            <person name="Nie H."/>
            <person name="Peng J."/>
            <person name="Xu J."/>
            <person name="Wang Y."/>
            <person name="Yuan Z."/>
            <person name="Wen Y."/>
            <person name="Yao Z."/>
            <person name="Shen Y."/>
            <person name="Qiang B."/>
            <person name="Hou Y."/>
            <person name="Yu J."/>
            <person name="Jin Q."/>
        </authorList>
    </citation>
    <scope>NUCLEOTIDE SEQUENCE [LARGE SCALE GENOMIC DNA]</scope>
    <source>
        <strain>Sb227</strain>
    </source>
</reference>
<sequence length="215" mass="24007">MLQVYLVRHGETQWNAERRIQGQSDSPLTAKGEQQAMQVATRAKELGITHIISSDLGRTRRTAEIIAQACGCDIIFDSRLRELNMGVLEKRHIDSLTEEEENWRRQLVNGTVDGRIPEGESMQELSDRVNAALESCRDLPQGSRPLLVSHGIALGCLVSTILGLPAWAARRLRLRNCSISRVDYQESLWLASGWVVETAGDISHLDAPALDELQR</sequence>
<organism>
    <name type="scientific">Shigella boydii serotype 4 (strain Sb227)</name>
    <dbReference type="NCBI Taxonomy" id="300268"/>
    <lineage>
        <taxon>Bacteria</taxon>
        <taxon>Pseudomonadati</taxon>
        <taxon>Pseudomonadota</taxon>
        <taxon>Gammaproteobacteria</taxon>
        <taxon>Enterobacterales</taxon>
        <taxon>Enterobacteriaceae</taxon>
        <taxon>Shigella</taxon>
    </lineage>
</organism>
<protein>
    <recommendedName>
        <fullName evidence="1">Probable phosphoglycerate mutase GpmB</fullName>
        <ecNumber evidence="1">5.4.2.-</ecNumber>
    </recommendedName>
    <alternativeName>
        <fullName evidence="1">PGAM</fullName>
    </alternativeName>
    <alternativeName>
        <fullName evidence="1">Phosphoglyceromutase</fullName>
    </alternativeName>
</protein>
<proteinExistence type="inferred from homology"/>
<evidence type="ECO:0000255" key="1">
    <source>
        <dbReference type="HAMAP-Rule" id="MF_01040"/>
    </source>
</evidence>
<dbReference type="EC" id="5.4.2.-" evidence="1"/>
<dbReference type="EMBL" id="CP000036">
    <property type="protein sequence ID" value="ABB68865.1"/>
    <property type="molecule type" value="Genomic_DNA"/>
</dbReference>
<dbReference type="RefSeq" id="WP_000942342.1">
    <property type="nucleotide sequence ID" value="NC_007613.1"/>
</dbReference>
<dbReference type="SMR" id="Q31SU3"/>
<dbReference type="KEGG" id="sbo:SBO_4458"/>
<dbReference type="HOGENOM" id="CLU_033323_9_5_6"/>
<dbReference type="UniPathway" id="UPA00109">
    <property type="reaction ID" value="UER00186"/>
</dbReference>
<dbReference type="Proteomes" id="UP000007067">
    <property type="component" value="Chromosome"/>
</dbReference>
<dbReference type="GO" id="GO:0005737">
    <property type="term" value="C:cytoplasm"/>
    <property type="evidence" value="ECO:0007669"/>
    <property type="project" value="TreeGrafter"/>
</dbReference>
<dbReference type="GO" id="GO:0016791">
    <property type="term" value="F:phosphatase activity"/>
    <property type="evidence" value="ECO:0007669"/>
    <property type="project" value="TreeGrafter"/>
</dbReference>
<dbReference type="GO" id="GO:0004619">
    <property type="term" value="F:phosphoglycerate mutase activity"/>
    <property type="evidence" value="ECO:0007669"/>
    <property type="project" value="UniProtKB-UniRule"/>
</dbReference>
<dbReference type="GO" id="GO:0006096">
    <property type="term" value="P:glycolytic process"/>
    <property type="evidence" value="ECO:0007669"/>
    <property type="project" value="UniProtKB-UniRule"/>
</dbReference>
<dbReference type="CDD" id="cd07067">
    <property type="entry name" value="HP_PGM_like"/>
    <property type="match status" value="1"/>
</dbReference>
<dbReference type="Gene3D" id="3.40.50.1240">
    <property type="entry name" value="Phosphoglycerate mutase-like"/>
    <property type="match status" value="1"/>
</dbReference>
<dbReference type="HAMAP" id="MF_01040">
    <property type="entry name" value="PGAM_GpmB"/>
    <property type="match status" value="1"/>
</dbReference>
<dbReference type="InterPro" id="IPR013078">
    <property type="entry name" value="His_Pase_superF_clade-1"/>
</dbReference>
<dbReference type="InterPro" id="IPR029033">
    <property type="entry name" value="His_PPase_superfam"/>
</dbReference>
<dbReference type="InterPro" id="IPR001345">
    <property type="entry name" value="PG/BPGM_mutase_AS"/>
</dbReference>
<dbReference type="InterPro" id="IPR050275">
    <property type="entry name" value="PGM_Phosphatase"/>
</dbReference>
<dbReference type="InterPro" id="IPR023086">
    <property type="entry name" value="Phosphoglycerate_mutase_GpmB"/>
</dbReference>
<dbReference type="NCBIfam" id="NF002901">
    <property type="entry name" value="PRK03482.1"/>
    <property type="match status" value="1"/>
</dbReference>
<dbReference type="PANTHER" id="PTHR48100">
    <property type="entry name" value="BROAD-SPECIFICITY PHOSPHATASE YOR283W-RELATED"/>
    <property type="match status" value="1"/>
</dbReference>
<dbReference type="PANTHER" id="PTHR48100:SF1">
    <property type="entry name" value="HISTIDINE PHOSPHATASE FAMILY PROTEIN-RELATED"/>
    <property type="match status" value="1"/>
</dbReference>
<dbReference type="Pfam" id="PF00300">
    <property type="entry name" value="His_Phos_1"/>
    <property type="match status" value="1"/>
</dbReference>
<dbReference type="SMART" id="SM00855">
    <property type="entry name" value="PGAM"/>
    <property type="match status" value="1"/>
</dbReference>
<dbReference type="SUPFAM" id="SSF53254">
    <property type="entry name" value="Phosphoglycerate mutase-like"/>
    <property type="match status" value="1"/>
</dbReference>
<dbReference type="PROSITE" id="PS00175">
    <property type="entry name" value="PG_MUTASE"/>
    <property type="match status" value="1"/>
</dbReference>
<accession>Q31SU3</accession>
<comment type="catalytic activity">
    <reaction evidence="1">
        <text>(2R)-2-phosphoglycerate = (2R)-3-phosphoglycerate</text>
        <dbReference type="Rhea" id="RHEA:15901"/>
        <dbReference type="ChEBI" id="CHEBI:58272"/>
        <dbReference type="ChEBI" id="CHEBI:58289"/>
    </reaction>
</comment>
<comment type="pathway">
    <text evidence="1">Carbohydrate degradation; glycolysis; pyruvate from D-glyceraldehyde 3-phosphate: step 3/5.</text>
</comment>
<comment type="similarity">
    <text evidence="1">Belongs to the phosphoglycerate mutase family. GpmB subfamily.</text>
</comment>
<feature type="chain" id="PRO_1000064131" description="Probable phosphoglycerate mutase GpmB">
    <location>
        <begin position="1"/>
        <end position="215"/>
    </location>
</feature>
<feature type="active site" description="Tele-phosphohistidine intermediate" evidence="1">
    <location>
        <position position="9"/>
    </location>
</feature>
<feature type="active site" description="Proton donor/acceptor" evidence="1">
    <location>
        <position position="82"/>
    </location>
</feature>
<feature type="binding site" evidence="1">
    <location>
        <begin position="8"/>
        <end position="15"/>
    </location>
    <ligand>
        <name>substrate</name>
    </ligand>
</feature>
<feature type="binding site" evidence="1">
    <location>
        <begin position="21"/>
        <end position="22"/>
    </location>
    <ligand>
        <name>substrate</name>
    </ligand>
</feature>
<feature type="binding site" evidence="1">
    <location>
        <position position="58"/>
    </location>
    <ligand>
        <name>substrate</name>
    </ligand>
</feature>
<feature type="binding site" evidence="1">
    <location>
        <position position="60"/>
    </location>
    <ligand>
        <name>substrate</name>
    </ligand>
</feature>
<feature type="binding site" evidence="1">
    <location>
        <begin position="82"/>
        <end position="85"/>
    </location>
    <ligand>
        <name>substrate</name>
    </ligand>
</feature>
<feature type="binding site" evidence="1">
    <location>
        <begin position="104"/>
        <end position="105"/>
    </location>
    <ligand>
        <name>substrate</name>
    </ligand>
</feature>
<feature type="binding site" evidence="1">
    <location>
        <begin position="151"/>
        <end position="152"/>
    </location>
    <ligand>
        <name>substrate</name>
    </ligand>
</feature>
<feature type="site" description="Transition state stabilizer" evidence="1">
    <location>
        <position position="150"/>
    </location>
</feature>
<keyword id="KW-0324">Glycolysis</keyword>
<keyword id="KW-0413">Isomerase</keyword>
<name>GPMB_SHIBS</name>